<organism>
    <name type="scientific">Brucella suis biovar 1 (strain 1330)</name>
    <dbReference type="NCBI Taxonomy" id="204722"/>
    <lineage>
        <taxon>Bacteria</taxon>
        <taxon>Pseudomonadati</taxon>
        <taxon>Pseudomonadota</taxon>
        <taxon>Alphaproteobacteria</taxon>
        <taxon>Hyphomicrobiales</taxon>
        <taxon>Brucellaceae</taxon>
        <taxon>Brucella/Ochrobactrum group</taxon>
        <taxon>Brucella</taxon>
    </lineage>
</organism>
<comment type="function">
    <text evidence="1">Forms part of the ribosomal stalk, playing a central role in the interaction of the ribosome with GTP-bound translation factors.</text>
</comment>
<comment type="subunit">
    <text evidence="1">Part of the ribosomal stalk of the 50S ribosomal subunit. The N-terminus interacts with L11 and the large rRNA to form the base of the stalk. The C-terminus forms an elongated spine to which L12 dimers bind in a sequential fashion forming a multimeric L10(L12)X complex.</text>
</comment>
<comment type="similarity">
    <text evidence="1">Belongs to the universal ribosomal protein uL10 family.</text>
</comment>
<reference key="1">
    <citation type="journal article" date="2002" name="Proc. Natl. Acad. Sci. U.S.A.">
        <title>The Brucella suis genome reveals fundamental similarities between animal and plant pathogens and symbionts.</title>
        <authorList>
            <person name="Paulsen I.T."/>
            <person name="Seshadri R."/>
            <person name="Nelson K.E."/>
            <person name="Eisen J.A."/>
            <person name="Heidelberg J.F."/>
            <person name="Read T.D."/>
            <person name="Dodson R.J."/>
            <person name="Umayam L.A."/>
            <person name="Brinkac L.M."/>
            <person name="Beanan M.J."/>
            <person name="Daugherty S.C."/>
            <person name="DeBoy R.T."/>
            <person name="Durkin A.S."/>
            <person name="Kolonay J.F."/>
            <person name="Madupu R."/>
            <person name="Nelson W.C."/>
            <person name="Ayodeji B."/>
            <person name="Kraul M."/>
            <person name="Shetty J."/>
            <person name="Malek J.A."/>
            <person name="Van Aken S.E."/>
            <person name="Riedmuller S."/>
            <person name="Tettelin H."/>
            <person name="Gill S.R."/>
            <person name="White O."/>
            <person name="Salzberg S.L."/>
            <person name="Hoover D.L."/>
            <person name="Lindler L.E."/>
            <person name="Halling S.M."/>
            <person name="Boyle S.M."/>
            <person name="Fraser C.M."/>
        </authorList>
    </citation>
    <scope>NUCLEOTIDE SEQUENCE [LARGE SCALE GENOMIC DNA]</scope>
    <source>
        <strain>1330</strain>
    </source>
</reference>
<reference key="2">
    <citation type="journal article" date="2011" name="J. Bacteriol.">
        <title>Revised genome sequence of Brucella suis 1330.</title>
        <authorList>
            <person name="Tae H."/>
            <person name="Shallom S."/>
            <person name="Settlage R."/>
            <person name="Preston D."/>
            <person name="Adams L.G."/>
            <person name="Garner H.R."/>
        </authorList>
    </citation>
    <scope>NUCLEOTIDE SEQUENCE [LARGE SCALE GENOMIC DNA]</scope>
    <source>
        <strain>1330</strain>
    </source>
</reference>
<evidence type="ECO:0000255" key="1">
    <source>
        <dbReference type="HAMAP-Rule" id="MF_00362"/>
    </source>
</evidence>
<evidence type="ECO:0000305" key="2"/>
<sequence length="172" mass="17975">MDRAEKREFVAWLNGAFKESGSVVVAHYTGLTVAQMSDLRSKMRDAGGSVKVAKNRLAKIALQGTESEGIADLFTGQTVVAYANDPITAPKVAVEFAKANDKLVILGGAMGATTLNADGVKSLASLPSLDELRAKLVGMIQTPAQRLAVLTSAPASQIARVIGAHARKNEAA</sequence>
<dbReference type="EMBL" id="AE014291">
    <property type="protein sequence ID" value="AAN30165.1"/>
    <property type="molecule type" value="Genomic_DNA"/>
</dbReference>
<dbReference type="EMBL" id="CP002997">
    <property type="protein sequence ID" value="AEM18583.1"/>
    <property type="molecule type" value="Genomic_DNA"/>
</dbReference>
<dbReference type="RefSeq" id="WP_006190506.1">
    <property type="nucleotide sequence ID" value="NZ_KN046804.1"/>
</dbReference>
<dbReference type="SMR" id="Q8G067"/>
<dbReference type="GeneID" id="45052278"/>
<dbReference type="KEGG" id="bms:BR1246"/>
<dbReference type="KEGG" id="bsi:BS1330_I1242"/>
<dbReference type="PATRIC" id="fig|204722.21.peg.3401"/>
<dbReference type="HOGENOM" id="CLU_092227_0_0_5"/>
<dbReference type="PhylomeDB" id="Q8G067"/>
<dbReference type="Proteomes" id="UP000007104">
    <property type="component" value="Chromosome I"/>
</dbReference>
<dbReference type="GO" id="GO:0015934">
    <property type="term" value="C:large ribosomal subunit"/>
    <property type="evidence" value="ECO:0007669"/>
    <property type="project" value="InterPro"/>
</dbReference>
<dbReference type="GO" id="GO:0070180">
    <property type="term" value="F:large ribosomal subunit rRNA binding"/>
    <property type="evidence" value="ECO:0007669"/>
    <property type="project" value="UniProtKB-UniRule"/>
</dbReference>
<dbReference type="GO" id="GO:0003735">
    <property type="term" value="F:structural constituent of ribosome"/>
    <property type="evidence" value="ECO:0007669"/>
    <property type="project" value="InterPro"/>
</dbReference>
<dbReference type="GO" id="GO:0006412">
    <property type="term" value="P:translation"/>
    <property type="evidence" value="ECO:0007669"/>
    <property type="project" value="UniProtKB-UniRule"/>
</dbReference>
<dbReference type="CDD" id="cd05797">
    <property type="entry name" value="Ribosomal_L10"/>
    <property type="match status" value="1"/>
</dbReference>
<dbReference type="Gene3D" id="3.30.70.1730">
    <property type="match status" value="1"/>
</dbReference>
<dbReference type="Gene3D" id="6.10.250.290">
    <property type="match status" value="1"/>
</dbReference>
<dbReference type="HAMAP" id="MF_00362">
    <property type="entry name" value="Ribosomal_uL10"/>
    <property type="match status" value="1"/>
</dbReference>
<dbReference type="InterPro" id="IPR001790">
    <property type="entry name" value="Ribosomal_uL10"/>
</dbReference>
<dbReference type="InterPro" id="IPR043141">
    <property type="entry name" value="Ribosomal_uL10-like_sf"/>
</dbReference>
<dbReference type="InterPro" id="IPR022973">
    <property type="entry name" value="Ribosomal_uL10_bac"/>
</dbReference>
<dbReference type="InterPro" id="IPR047865">
    <property type="entry name" value="Ribosomal_uL10_bac_type"/>
</dbReference>
<dbReference type="InterPro" id="IPR002363">
    <property type="entry name" value="Ribosomal_uL10_CS_bac"/>
</dbReference>
<dbReference type="NCBIfam" id="NF000955">
    <property type="entry name" value="PRK00099.1-1"/>
    <property type="match status" value="1"/>
</dbReference>
<dbReference type="PANTHER" id="PTHR11560">
    <property type="entry name" value="39S RIBOSOMAL PROTEIN L10, MITOCHONDRIAL"/>
    <property type="match status" value="1"/>
</dbReference>
<dbReference type="Pfam" id="PF00466">
    <property type="entry name" value="Ribosomal_L10"/>
    <property type="match status" value="1"/>
</dbReference>
<dbReference type="SUPFAM" id="SSF160369">
    <property type="entry name" value="Ribosomal protein L10-like"/>
    <property type="match status" value="1"/>
</dbReference>
<dbReference type="PROSITE" id="PS01109">
    <property type="entry name" value="RIBOSOMAL_L10"/>
    <property type="match status" value="1"/>
</dbReference>
<gene>
    <name evidence="1" type="primary">rplJ</name>
    <name type="ordered locus">BR1246</name>
    <name type="ordered locus">BS1330_I1242</name>
</gene>
<feature type="chain" id="PRO_0000154601" description="Large ribosomal subunit protein uL10">
    <location>
        <begin position="1"/>
        <end position="172"/>
    </location>
</feature>
<proteinExistence type="inferred from homology"/>
<protein>
    <recommendedName>
        <fullName evidence="1">Large ribosomal subunit protein uL10</fullName>
    </recommendedName>
    <alternativeName>
        <fullName evidence="2">50S ribosomal protein L10</fullName>
    </alternativeName>
</protein>
<keyword id="KW-0687">Ribonucleoprotein</keyword>
<keyword id="KW-0689">Ribosomal protein</keyword>
<keyword id="KW-0694">RNA-binding</keyword>
<keyword id="KW-0699">rRNA-binding</keyword>
<name>RL10_BRUSU</name>
<accession>Q8G067</accession>
<accession>G0KAG7</accession>